<gene>
    <name evidence="1" type="primary">fluC2</name>
    <name evidence="1" type="synonym">crcB2</name>
    <name type="ordered locus">MT3154</name>
</gene>
<organism>
    <name type="scientific">Mycobacterium tuberculosis (strain CDC 1551 / Oshkosh)</name>
    <dbReference type="NCBI Taxonomy" id="83331"/>
    <lineage>
        <taxon>Bacteria</taxon>
        <taxon>Bacillati</taxon>
        <taxon>Actinomycetota</taxon>
        <taxon>Actinomycetes</taxon>
        <taxon>Mycobacteriales</taxon>
        <taxon>Mycobacteriaceae</taxon>
        <taxon>Mycobacterium</taxon>
        <taxon>Mycobacterium tuberculosis complex</taxon>
    </lineage>
</organism>
<sequence>MTASTALTVAIWIGVMLIGGIGSVLRFLVDRSVARRLARTFPYGTLTVNITGAALLGFLAGLALPKDAALLAGTGFVGAYTTFSTWMLETQRLGEDRQMVSALANIVVSVVLGLAAALLGQWIAQI</sequence>
<reference key="1">
    <citation type="journal article" date="2002" name="J. Bacteriol.">
        <title>Whole-genome comparison of Mycobacterium tuberculosis clinical and laboratory strains.</title>
        <authorList>
            <person name="Fleischmann R.D."/>
            <person name="Alland D."/>
            <person name="Eisen J.A."/>
            <person name="Carpenter L."/>
            <person name="White O."/>
            <person name="Peterson J.D."/>
            <person name="DeBoy R.T."/>
            <person name="Dodson R.J."/>
            <person name="Gwinn M.L."/>
            <person name="Haft D.H."/>
            <person name="Hickey E.K."/>
            <person name="Kolonay J.F."/>
            <person name="Nelson W.C."/>
            <person name="Umayam L.A."/>
            <person name="Ermolaeva M.D."/>
            <person name="Salzberg S.L."/>
            <person name="Delcher A."/>
            <person name="Utterback T.R."/>
            <person name="Weidman J.F."/>
            <person name="Khouri H.M."/>
            <person name="Gill J."/>
            <person name="Mikula A."/>
            <person name="Bishai W."/>
            <person name="Jacobs W.R. Jr."/>
            <person name="Venter J.C."/>
            <person name="Fraser C.M."/>
        </authorList>
    </citation>
    <scope>NUCLEOTIDE SEQUENCE [LARGE SCALE GENOMIC DNA]</scope>
    <source>
        <strain>CDC 1551 / Oshkosh</strain>
    </source>
</reference>
<keyword id="KW-1003">Cell membrane</keyword>
<keyword id="KW-0407">Ion channel</keyword>
<keyword id="KW-0406">Ion transport</keyword>
<keyword id="KW-0472">Membrane</keyword>
<keyword id="KW-0479">Metal-binding</keyword>
<keyword id="KW-1185">Reference proteome</keyword>
<keyword id="KW-0915">Sodium</keyword>
<keyword id="KW-0812">Transmembrane</keyword>
<keyword id="KW-1133">Transmembrane helix</keyword>
<keyword id="KW-0813">Transport</keyword>
<evidence type="ECO:0000255" key="1">
    <source>
        <dbReference type="HAMAP-Rule" id="MF_00454"/>
    </source>
</evidence>
<name>FLUC2_MYCTO</name>
<protein>
    <recommendedName>
        <fullName evidence="1">Fluoride-specific ion channel FluC 2</fullName>
    </recommendedName>
</protein>
<accession>P9WP60</accession>
<accession>L0TE95</accession>
<accession>P63864</accession>
<accession>P95088</accession>
<comment type="function">
    <text evidence="1">Fluoride-specific ion channel. Important for reducing fluoride concentration in the cell, thus reducing its toxicity.</text>
</comment>
<comment type="catalytic activity">
    <reaction evidence="1">
        <text>fluoride(in) = fluoride(out)</text>
        <dbReference type="Rhea" id="RHEA:76159"/>
        <dbReference type="ChEBI" id="CHEBI:17051"/>
    </reaction>
    <physiologicalReaction direction="left-to-right" evidence="1">
        <dbReference type="Rhea" id="RHEA:76160"/>
    </physiologicalReaction>
</comment>
<comment type="activity regulation">
    <text evidence="1">Na(+) is not transported, but it plays an essential structural role and its presence is essential for fluoride channel function.</text>
</comment>
<comment type="subcellular location">
    <subcellularLocation>
        <location evidence="1">Cell membrane</location>
        <topology evidence="1">Multi-pass membrane protein</topology>
    </subcellularLocation>
</comment>
<comment type="similarity">
    <text evidence="1">Belongs to the fluoride channel Fluc/FEX (TC 1.A.43) family.</text>
</comment>
<dbReference type="EMBL" id="AE000516">
    <property type="protein sequence ID" value="AAK47490.1"/>
    <property type="molecule type" value="Genomic_DNA"/>
</dbReference>
<dbReference type="PIR" id="G70650">
    <property type="entry name" value="G70650"/>
</dbReference>
<dbReference type="SMR" id="P9WP60"/>
<dbReference type="KEGG" id="mtc:MT3154"/>
<dbReference type="PATRIC" id="fig|83331.31.peg.3400"/>
<dbReference type="HOGENOM" id="CLU_114342_2_1_11"/>
<dbReference type="Proteomes" id="UP000001020">
    <property type="component" value="Chromosome"/>
</dbReference>
<dbReference type="GO" id="GO:0005886">
    <property type="term" value="C:plasma membrane"/>
    <property type="evidence" value="ECO:0007669"/>
    <property type="project" value="UniProtKB-SubCell"/>
</dbReference>
<dbReference type="GO" id="GO:0062054">
    <property type="term" value="F:fluoride channel activity"/>
    <property type="evidence" value="ECO:0007669"/>
    <property type="project" value="UniProtKB-UniRule"/>
</dbReference>
<dbReference type="GO" id="GO:0046872">
    <property type="term" value="F:metal ion binding"/>
    <property type="evidence" value="ECO:0007669"/>
    <property type="project" value="UniProtKB-KW"/>
</dbReference>
<dbReference type="GO" id="GO:0140114">
    <property type="term" value="P:cellular detoxification of fluoride"/>
    <property type="evidence" value="ECO:0007669"/>
    <property type="project" value="UniProtKB-UniRule"/>
</dbReference>
<dbReference type="HAMAP" id="MF_00454">
    <property type="entry name" value="FluC"/>
    <property type="match status" value="1"/>
</dbReference>
<dbReference type="InterPro" id="IPR003691">
    <property type="entry name" value="FluC"/>
</dbReference>
<dbReference type="NCBIfam" id="TIGR00494">
    <property type="entry name" value="crcB"/>
    <property type="match status" value="1"/>
</dbReference>
<dbReference type="NCBIfam" id="NF010824">
    <property type="entry name" value="PRK14228.1"/>
    <property type="match status" value="1"/>
</dbReference>
<dbReference type="PANTHER" id="PTHR28259">
    <property type="entry name" value="FLUORIDE EXPORT PROTEIN 1-RELATED"/>
    <property type="match status" value="1"/>
</dbReference>
<dbReference type="PANTHER" id="PTHR28259:SF1">
    <property type="entry name" value="FLUORIDE EXPORT PROTEIN 1-RELATED"/>
    <property type="match status" value="1"/>
</dbReference>
<dbReference type="Pfam" id="PF02537">
    <property type="entry name" value="CRCB"/>
    <property type="match status" value="1"/>
</dbReference>
<feature type="chain" id="PRO_0000427008" description="Fluoride-specific ion channel FluC 2">
    <location>
        <begin position="1"/>
        <end position="126"/>
    </location>
</feature>
<feature type="transmembrane region" description="Helical" evidence="1">
    <location>
        <begin position="5"/>
        <end position="25"/>
    </location>
</feature>
<feature type="transmembrane region" description="Helical" evidence="1">
    <location>
        <begin position="44"/>
        <end position="64"/>
    </location>
</feature>
<feature type="transmembrane region" description="Helical" evidence="1">
    <location>
        <begin position="68"/>
        <end position="88"/>
    </location>
</feature>
<feature type="transmembrane region" description="Helical" evidence="1">
    <location>
        <begin position="99"/>
        <end position="119"/>
    </location>
</feature>
<feature type="binding site" evidence="1">
    <location>
        <position position="78"/>
    </location>
    <ligand>
        <name>Na(+)</name>
        <dbReference type="ChEBI" id="CHEBI:29101"/>
        <note>structural</note>
    </ligand>
</feature>
<feature type="binding site" evidence="1">
    <location>
        <position position="81"/>
    </location>
    <ligand>
        <name>Na(+)</name>
        <dbReference type="ChEBI" id="CHEBI:29101"/>
        <note>structural</note>
    </ligand>
</feature>
<proteinExistence type="inferred from homology"/>